<accession>Q9HUP3</accession>
<dbReference type="EC" id="6.3.1.5" evidence="1"/>
<dbReference type="EMBL" id="AE004091">
    <property type="protein sequence ID" value="AAG08305.1"/>
    <property type="molecule type" value="Genomic_DNA"/>
</dbReference>
<dbReference type="PIR" id="F83030">
    <property type="entry name" value="F83030"/>
</dbReference>
<dbReference type="RefSeq" id="NP_253607.1">
    <property type="nucleotide sequence ID" value="NC_002516.2"/>
</dbReference>
<dbReference type="RefSeq" id="WP_003099998.1">
    <property type="nucleotide sequence ID" value="NZ_QZGE01000002.1"/>
</dbReference>
<dbReference type="PDB" id="4XFD">
    <property type="method" value="X-ray"/>
    <property type="resolution" value="1.55 A"/>
    <property type="chains" value="A=1-275"/>
</dbReference>
<dbReference type="PDB" id="5F23">
    <property type="method" value="X-ray"/>
    <property type="resolution" value="1.50 A"/>
    <property type="chains" value="A=1-275"/>
</dbReference>
<dbReference type="PDBsum" id="4XFD"/>
<dbReference type="PDBsum" id="5F23"/>
<dbReference type="SMR" id="Q9HUP3"/>
<dbReference type="FunCoup" id="Q9HUP3">
    <property type="interactions" value="793"/>
</dbReference>
<dbReference type="STRING" id="208964.PA4920"/>
<dbReference type="PaxDb" id="208964-PA4920"/>
<dbReference type="DNASU" id="882213"/>
<dbReference type="GeneID" id="882213"/>
<dbReference type="KEGG" id="pae:PA4920"/>
<dbReference type="PATRIC" id="fig|208964.12.peg.5153"/>
<dbReference type="PseudoCAP" id="PA4920"/>
<dbReference type="HOGENOM" id="CLU_059327_3_0_6"/>
<dbReference type="InParanoid" id="Q9HUP3"/>
<dbReference type="OrthoDB" id="3266517at2"/>
<dbReference type="PhylomeDB" id="Q9HUP3"/>
<dbReference type="BioCyc" id="PAER208964:G1FZ6-5034-MONOMER"/>
<dbReference type="UniPathway" id="UPA00253">
    <property type="reaction ID" value="UER00333"/>
</dbReference>
<dbReference type="EvolutionaryTrace" id="Q9HUP3"/>
<dbReference type="Proteomes" id="UP000002438">
    <property type="component" value="Chromosome"/>
</dbReference>
<dbReference type="GO" id="GO:0005737">
    <property type="term" value="C:cytoplasm"/>
    <property type="evidence" value="ECO:0000318"/>
    <property type="project" value="GO_Central"/>
</dbReference>
<dbReference type="GO" id="GO:0005524">
    <property type="term" value="F:ATP binding"/>
    <property type="evidence" value="ECO:0007669"/>
    <property type="project" value="UniProtKB-UniRule"/>
</dbReference>
<dbReference type="GO" id="GO:0004359">
    <property type="term" value="F:glutaminase activity"/>
    <property type="evidence" value="ECO:0007669"/>
    <property type="project" value="InterPro"/>
</dbReference>
<dbReference type="GO" id="GO:0046872">
    <property type="term" value="F:metal ion binding"/>
    <property type="evidence" value="ECO:0007669"/>
    <property type="project" value="UniProtKB-KW"/>
</dbReference>
<dbReference type="GO" id="GO:0003952">
    <property type="term" value="F:NAD+ synthase (glutamine-hydrolyzing) activity"/>
    <property type="evidence" value="ECO:0007669"/>
    <property type="project" value="InterPro"/>
</dbReference>
<dbReference type="GO" id="GO:0008795">
    <property type="term" value="F:NAD+ synthase activity"/>
    <property type="evidence" value="ECO:0007669"/>
    <property type="project" value="UniProtKB-UniRule"/>
</dbReference>
<dbReference type="GO" id="GO:0009435">
    <property type="term" value="P:NAD biosynthetic process"/>
    <property type="evidence" value="ECO:0000318"/>
    <property type="project" value="GO_Central"/>
</dbReference>
<dbReference type="CDD" id="cd00553">
    <property type="entry name" value="NAD_synthase"/>
    <property type="match status" value="1"/>
</dbReference>
<dbReference type="FunFam" id="3.40.50.620:FF:000253">
    <property type="entry name" value="NH(3)-dependent NAD(+) synthetase"/>
    <property type="match status" value="1"/>
</dbReference>
<dbReference type="Gene3D" id="3.40.50.620">
    <property type="entry name" value="HUPs"/>
    <property type="match status" value="1"/>
</dbReference>
<dbReference type="HAMAP" id="MF_00193">
    <property type="entry name" value="NadE_ammonia_dep"/>
    <property type="match status" value="1"/>
</dbReference>
<dbReference type="InterPro" id="IPR022310">
    <property type="entry name" value="NAD/GMP_synthase"/>
</dbReference>
<dbReference type="InterPro" id="IPR003694">
    <property type="entry name" value="NAD_synthase"/>
</dbReference>
<dbReference type="InterPro" id="IPR022926">
    <property type="entry name" value="NH(3)-dep_NAD(+)_synth"/>
</dbReference>
<dbReference type="InterPro" id="IPR014729">
    <property type="entry name" value="Rossmann-like_a/b/a_fold"/>
</dbReference>
<dbReference type="NCBIfam" id="TIGR00552">
    <property type="entry name" value="nadE"/>
    <property type="match status" value="1"/>
</dbReference>
<dbReference type="NCBIfam" id="NF001979">
    <property type="entry name" value="PRK00768.1"/>
    <property type="match status" value="1"/>
</dbReference>
<dbReference type="PANTHER" id="PTHR23090">
    <property type="entry name" value="NH 3 /GLUTAMINE-DEPENDENT NAD + SYNTHETASE"/>
    <property type="match status" value="1"/>
</dbReference>
<dbReference type="PANTHER" id="PTHR23090:SF7">
    <property type="entry name" value="NH(3)-DEPENDENT NAD(+) SYNTHETASE"/>
    <property type="match status" value="1"/>
</dbReference>
<dbReference type="Pfam" id="PF02540">
    <property type="entry name" value="NAD_synthase"/>
    <property type="match status" value="1"/>
</dbReference>
<dbReference type="SUPFAM" id="SSF52402">
    <property type="entry name" value="Adenine nucleotide alpha hydrolases-like"/>
    <property type="match status" value="1"/>
</dbReference>
<organism>
    <name type="scientific">Pseudomonas aeruginosa (strain ATCC 15692 / DSM 22644 / CIP 104116 / JCM 14847 / LMG 12228 / 1C / PRS 101 / PAO1)</name>
    <dbReference type="NCBI Taxonomy" id="208964"/>
    <lineage>
        <taxon>Bacteria</taxon>
        <taxon>Pseudomonadati</taxon>
        <taxon>Pseudomonadota</taxon>
        <taxon>Gammaproteobacteria</taxon>
        <taxon>Pseudomonadales</taxon>
        <taxon>Pseudomonadaceae</taxon>
        <taxon>Pseudomonas</taxon>
    </lineage>
</organism>
<name>NADE_PSEAE</name>
<feature type="chain" id="PRO_0000152185" description="NH(3)-dependent NAD(+) synthetase">
    <location>
        <begin position="1"/>
        <end position="275"/>
    </location>
</feature>
<feature type="binding site" evidence="1">
    <location>
        <begin position="50"/>
        <end position="57"/>
    </location>
    <ligand>
        <name>ATP</name>
        <dbReference type="ChEBI" id="CHEBI:30616"/>
    </ligand>
</feature>
<feature type="binding site" evidence="1">
    <location>
        <position position="56"/>
    </location>
    <ligand>
        <name>Mg(2+)</name>
        <dbReference type="ChEBI" id="CHEBI:18420"/>
    </ligand>
</feature>
<feature type="binding site" evidence="2">
    <location>
        <position position="143"/>
    </location>
    <ligand>
        <name>deamido-NAD(+)</name>
        <dbReference type="ChEBI" id="CHEBI:58437"/>
    </ligand>
</feature>
<feature type="binding site" evidence="1 2">
    <location>
        <position position="147"/>
    </location>
    <ligand>
        <name>deamido-NAD(+)</name>
        <dbReference type="ChEBI" id="CHEBI:58437"/>
    </ligand>
</feature>
<feature type="binding site" evidence="1">
    <location>
        <position position="167"/>
    </location>
    <ligand>
        <name>ATP</name>
        <dbReference type="ChEBI" id="CHEBI:30616"/>
    </ligand>
</feature>
<feature type="binding site" evidence="1">
    <location>
        <position position="172"/>
    </location>
    <ligand>
        <name>Mg(2+)</name>
        <dbReference type="ChEBI" id="CHEBI:18420"/>
    </ligand>
</feature>
<feature type="binding site" evidence="1 2">
    <location>
        <position position="180"/>
    </location>
    <ligand>
        <name>deamido-NAD(+)</name>
        <dbReference type="ChEBI" id="CHEBI:58437"/>
    </ligand>
</feature>
<feature type="binding site" evidence="1">
    <location>
        <position position="187"/>
    </location>
    <ligand>
        <name>deamido-NAD(+)</name>
        <dbReference type="ChEBI" id="CHEBI:58437"/>
    </ligand>
</feature>
<feature type="binding site" evidence="1">
    <location>
        <position position="196"/>
    </location>
    <ligand>
        <name>ATP</name>
        <dbReference type="ChEBI" id="CHEBI:30616"/>
    </ligand>
</feature>
<feature type="binding site" evidence="1">
    <location>
        <position position="218"/>
    </location>
    <ligand>
        <name>ATP</name>
        <dbReference type="ChEBI" id="CHEBI:30616"/>
    </ligand>
</feature>
<feature type="binding site" evidence="1 2">
    <location>
        <begin position="267"/>
        <end position="268"/>
    </location>
    <ligand>
        <name>deamido-NAD(+)</name>
        <dbReference type="ChEBI" id="CHEBI:58437"/>
    </ligand>
</feature>
<feature type="binding site" evidence="2">
    <location>
        <position position="268"/>
    </location>
    <ligand>
        <name>deamido-NAD(+)</name>
        <dbReference type="ChEBI" id="CHEBI:58437"/>
    </ligand>
</feature>
<feature type="helix" evidence="5">
    <location>
        <begin position="1"/>
        <end position="11"/>
    </location>
</feature>
<feature type="helix" evidence="5">
    <location>
        <begin position="21"/>
        <end position="42"/>
    </location>
</feature>
<feature type="strand" evidence="5">
    <location>
        <begin position="46"/>
        <end position="51"/>
    </location>
</feature>
<feature type="helix" evidence="5">
    <location>
        <begin position="55"/>
        <end position="75"/>
    </location>
</feature>
<feature type="strand" evidence="5">
    <location>
        <begin position="81"/>
        <end position="86"/>
    </location>
</feature>
<feature type="helix" evidence="5">
    <location>
        <begin position="92"/>
        <end position="105"/>
    </location>
</feature>
<feature type="strand" evidence="5">
    <location>
        <begin position="108"/>
        <end position="112"/>
    </location>
</feature>
<feature type="helix" evidence="5">
    <location>
        <begin position="116"/>
        <end position="123"/>
    </location>
</feature>
<feature type="helix" evidence="5">
    <location>
        <begin position="127"/>
        <end position="129"/>
    </location>
</feature>
<feature type="helix" evidence="5">
    <location>
        <begin position="134"/>
        <end position="160"/>
    </location>
</feature>
<feature type="strand" evidence="5">
    <location>
        <begin position="162"/>
        <end position="165"/>
    </location>
</feature>
<feature type="helix" evidence="5">
    <location>
        <begin position="170"/>
        <end position="175"/>
    </location>
</feature>
<feature type="turn" evidence="5">
    <location>
        <begin position="180"/>
        <end position="184"/>
    </location>
</feature>
<feature type="turn" evidence="5">
    <location>
        <begin position="190"/>
        <end position="193"/>
    </location>
</feature>
<feature type="helix" evidence="5">
    <location>
        <begin position="196"/>
        <end position="205"/>
    </location>
</feature>
<feature type="helix" evidence="5">
    <location>
        <begin position="210"/>
        <end position="213"/>
    </location>
</feature>
<feature type="helix" evidence="5">
    <location>
        <begin position="238"/>
        <end position="245"/>
    </location>
</feature>
<feature type="helix" evidence="5">
    <location>
        <begin position="252"/>
        <end position="264"/>
    </location>
</feature>
<feature type="helix" evidence="5">
    <location>
        <begin position="266"/>
        <end position="269"/>
    </location>
</feature>
<sequence>MQQIQRDIAQALQVQPPFQSEADVQAQIARRIAFIQQCLKDSGLKTLVLGISGGVDSLTAGLLAQRAVEQLREQTGDQAYRFIAVRLPYQVQQDEADAQASLATIRADEEQTVNIGPSVKALAEQLEALEGLEPAKSDFVIGNIKARIRMVAQYAIAGARGGLVIGTDHAAEAVMGFFTKFGDGACDLAPLSGLAKHQVRALARALGAPENLVEKIPTADLEDLRPGHPDEASHGVTYAEIDAFLHGQPLREEAARVIVDTYHKTQHKRELPKAP</sequence>
<keyword id="KW-0002">3D-structure</keyword>
<keyword id="KW-0067">ATP-binding</keyword>
<keyword id="KW-0436">Ligase</keyword>
<keyword id="KW-0460">Magnesium</keyword>
<keyword id="KW-0479">Metal-binding</keyword>
<keyword id="KW-0520">NAD</keyword>
<keyword id="KW-0547">Nucleotide-binding</keyword>
<keyword id="KW-1185">Reference proteome</keyword>
<comment type="function">
    <text evidence="1">Catalyzes the ATP-dependent amidation of deamido-NAD to form NAD. Uses ammonia as a nitrogen source.</text>
</comment>
<comment type="catalytic activity">
    <reaction evidence="1">
        <text>deamido-NAD(+) + NH4(+) + ATP = AMP + diphosphate + NAD(+) + H(+)</text>
        <dbReference type="Rhea" id="RHEA:21188"/>
        <dbReference type="ChEBI" id="CHEBI:15378"/>
        <dbReference type="ChEBI" id="CHEBI:28938"/>
        <dbReference type="ChEBI" id="CHEBI:30616"/>
        <dbReference type="ChEBI" id="CHEBI:33019"/>
        <dbReference type="ChEBI" id="CHEBI:57540"/>
        <dbReference type="ChEBI" id="CHEBI:58437"/>
        <dbReference type="ChEBI" id="CHEBI:456215"/>
        <dbReference type="EC" id="6.3.1.5"/>
    </reaction>
</comment>
<comment type="pathway">
    <text evidence="1">Cofactor biosynthesis; NAD(+) biosynthesis; NAD(+) from deamido-NAD(+) (ammonia route): step 1/1.</text>
</comment>
<comment type="subunit">
    <text evidence="1">Homodimer.</text>
</comment>
<comment type="similarity">
    <text evidence="1">Belongs to the NAD synthetase family.</text>
</comment>
<proteinExistence type="evidence at protein level"/>
<protein>
    <recommendedName>
        <fullName evidence="1">NH(3)-dependent NAD(+) synthetase</fullName>
        <ecNumber evidence="1">6.3.1.5</ecNumber>
    </recommendedName>
</protein>
<gene>
    <name evidence="1" type="primary">nadE</name>
    <name type="ordered locus">PA4920</name>
</gene>
<reference key="1">
    <citation type="journal article" date="2000" name="Nature">
        <title>Complete genome sequence of Pseudomonas aeruginosa PAO1, an opportunistic pathogen.</title>
        <authorList>
            <person name="Stover C.K."/>
            <person name="Pham X.-Q.T."/>
            <person name="Erwin A.L."/>
            <person name="Mizoguchi S.D."/>
            <person name="Warrener P."/>
            <person name="Hickey M.J."/>
            <person name="Brinkman F.S.L."/>
            <person name="Hufnagle W.O."/>
            <person name="Kowalik D.J."/>
            <person name="Lagrou M."/>
            <person name="Garber R.L."/>
            <person name="Goltry L."/>
            <person name="Tolentino E."/>
            <person name="Westbrock-Wadman S."/>
            <person name="Yuan Y."/>
            <person name="Brody L.L."/>
            <person name="Coulter S.N."/>
            <person name="Folger K.R."/>
            <person name="Kas A."/>
            <person name="Larbig K."/>
            <person name="Lim R.M."/>
            <person name="Smith K.A."/>
            <person name="Spencer D.H."/>
            <person name="Wong G.K.-S."/>
            <person name="Wu Z."/>
            <person name="Paulsen I.T."/>
            <person name="Reizer J."/>
            <person name="Saier M.H. Jr."/>
            <person name="Hancock R.E.W."/>
            <person name="Lory S."/>
            <person name="Olson M.V."/>
        </authorList>
    </citation>
    <scope>NUCLEOTIDE SEQUENCE [LARGE SCALE GENOMIC DNA]</scope>
    <source>
        <strain>ATCC 15692 / DSM 22644 / CIP 104116 / JCM 14847 / LMG 12228 / 1C / PRS 101 / PAO1</strain>
    </source>
</reference>
<reference evidence="3" key="2">
    <citation type="submission" date="2014-12" db="PDB data bank">
        <title>Crystal structure of a NH(3)-dependent NAD(+) synthetase from Pseudomonas aeruginosa.</title>
        <authorList>
            <person name="Dranow D.M."/>
            <person name="Lorimer D."/>
            <person name="Edwards T.E."/>
        </authorList>
    </citation>
    <scope>X-RAY CRYSTALLOGRAPHY (1.55 ANGSTROMS)</scope>
    <source>
        <strain>ATCC 15692 / DSM 22644 / CIP 104116 / JCM 14847 / LMG 12228 / 1C / PRS 101 / PAO1</strain>
    </source>
</reference>
<reference evidence="4" key="3">
    <citation type="submission" date="2015-12" db="PDB data bank">
        <title>Crystal structure of NH(3)-dependent NAD(+) synthetase Pseudomonas aeruginosa in complex with NAD.</title>
        <authorList>
            <person name="Abendroth J."/>
            <person name="Mayclin S.J."/>
            <person name="Lorimer D.D."/>
            <person name="Edwards T.E."/>
        </authorList>
    </citation>
    <scope>X-RAY CRYSTALLOGRAPHY (1.50 ANGSTROMS) IN COMPLEX WITH NAD</scope>
    <source>
        <strain>ATCC 15692 / DSM 22644 / CIP 104116 / JCM 14847 / LMG 12228 / 1C / PRS 101 / PAO1</strain>
    </source>
</reference>
<evidence type="ECO:0000255" key="1">
    <source>
        <dbReference type="HAMAP-Rule" id="MF_00193"/>
    </source>
</evidence>
<evidence type="ECO:0000305" key="2">
    <source ref="3"/>
</evidence>
<evidence type="ECO:0007744" key="3">
    <source>
        <dbReference type="PDB" id="4XFD"/>
    </source>
</evidence>
<evidence type="ECO:0007744" key="4">
    <source>
        <dbReference type="PDB" id="5F23"/>
    </source>
</evidence>
<evidence type="ECO:0007829" key="5">
    <source>
        <dbReference type="PDB" id="5F23"/>
    </source>
</evidence>